<gene>
    <name type="ORF">SPAC27E2.06c</name>
</gene>
<keyword id="KW-0030">Aminoacyl-tRNA synthetase</keyword>
<keyword id="KW-0067">ATP-binding</keyword>
<keyword id="KW-0436">Ligase</keyword>
<keyword id="KW-0496">Mitochondrion</keyword>
<keyword id="KW-0547">Nucleotide-binding</keyword>
<keyword id="KW-0648">Protein biosynthesis</keyword>
<keyword id="KW-1185">Reference proteome</keyword>
<keyword id="KW-0809">Transit peptide</keyword>
<comment type="catalytic activity">
    <reaction>
        <text>tRNA(Met) + L-methionine + ATP = L-methionyl-tRNA(Met) + AMP + diphosphate</text>
        <dbReference type="Rhea" id="RHEA:13481"/>
        <dbReference type="Rhea" id="RHEA-COMP:9667"/>
        <dbReference type="Rhea" id="RHEA-COMP:9698"/>
        <dbReference type="ChEBI" id="CHEBI:30616"/>
        <dbReference type="ChEBI" id="CHEBI:33019"/>
        <dbReference type="ChEBI" id="CHEBI:57844"/>
        <dbReference type="ChEBI" id="CHEBI:78442"/>
        <dbReference type="ChEBI" id="CHEBI:78530"/>
        <dbReference type="ChEBI" id="CHEBI:456215"/>
        <dbReference type="EC" id="6.1.1.10"/>
    </reaction>
</comment>
<comment type="subcellular location">
    <subcellularLocation>
        <location evidence="3">Mitochondrion matrix</location>
    </subcellularLocation>
</comment>
<comment type="similarity">
    <text evidence="4">Belongs to the class-I aminoacyl-tRNA synthetase family.</text>
</comment>
<proteinExistence type="inferred from homology"/>
<evidence type="ECO:0000250" key="1"/>
<evidence type="ECO:0000255" key="2"/>
<evidence type="ECO:0000269" key="3">
    <source>
    </source>
</evidence>
<evidence type="ECO:0000305" key="4"/>
<feature type="transit peptide" description="Mitochondrion" evidence="2">
    <location>
        <begin position="1"/>
        <end status="unknown"/>
    </location>
</feature>
<feature type="chain" id="PRO_0000374024" description="Probable methionine--tRNA ligase, mitochondrial">
    <location>
        <begin status="unknown"/>
        <end position="539"/>
    </location>
</feature>
<feature type="short sequence motif" description="'HIGH' region" evidence="1">
    <location>
        <begin position="28"/>
        <end position="38"/>
    </location>
</feature>
<feature type="short sequence motif" description="'KMSKS' region" evidence="1">
    <location>
        <begin position="326"/>
        <end position="330"/>
    </location>
</feature>
<feature type="binding site" evidence="1">
    <location>
        <position position="329"/>
    </location>
    <ligand>
        <name>ATP</name>
        <dbReference type="ChEBI" id="CHEBI:30616"/>
    </ligand>
</feature>
<reference key="1">
    <citation type="journal article" date="2002" name="Nature">
        <title>The genome sequence of Schizosaccharomyces pombe.</title>
        <authorList>
            <person name="Wood V."/>
            <person name="Gwilliam R."/>
            <person name="Rajandream M.A."/>
            <person name="Lyne M.H."/>
            <person name="Lyne R."/>
            <person name="Stewart A."/>
            <person name="Sgouros J.G."/>
            <person name="Peat N."/>
            <person name="Hayles J."/>
            <person name="Baker S.G."/>
            <person name="Basham D."/>
            <person name="Bowman S."/>
            <person name="Brooks K."/>
            <person name="Brown D."/>
            <person name="Brown S."/>
            <person name="Chillingworth T."/>
            <person name="Churcher C.M."/>
            <person name="Collins M."/>
            <person name="Connor R."/>
            <person name="Cronin A."/>
            <person name="Davis P."/>
            <person name="Feltwell T."/>
            <person name="Fraser A."/>
            <person name="Gentles S."/>
            <person name="Goble A."/>
            <person name="Hamlin N."/>
            <person name="Harris D.E."/>
            <person name="Hidalgo J."/>
            <person name="Hodgson G."/>
            <person name="Holroyd S."/>
            <person name="Hornsby T."/>
            <person name="Howarth S."/>
            <person name="Huckle E.J."/>
            <person name="Hunt S."/>
            <person name="Jagels K."/>
            <person name="James K.D."/>
            <person name="Jones L."/>
            <person name="Jones M."/>
            <person name="Leather S."/>
            <person name="McDonald S."/>
            <person name="McLean J."/>
            <person name="Mooney P."/>
            <person name="Moule S."/>
            <person name="Mungall K.L."/>
            <person name="Murphy L.D."/>
            <person name="Niblett D."/>
            <person name="Odell C."/>
            <person name="Oliver K."/>
            <person name="O'Neil S."/>
            <person name="Pearson D."/>
            <person name="Quail M.A."/>
            <person name="Rabbinowitsch E."/>
            <person name="Rutherford K.M."/>
            <person name="Rutter S."/>
            <person name="Saunders D."/>
            <person name="Seeger K."/>
            <person name="Sharp S."/>
            <person name="Skelton J."/>
            <person name="Simmonds M.N."/>
            <person name="Squares R."/>
            <person name="Squares S."/>
            <person name="Stevens K."/>
            <person name="Taylor K."/>
            <person name="Taylor R.G."/>
            <person name="Tivey A."/>
            <person name="Walsh S.V."/>
            <person name="Warren T."/>
            <person name="Whitehead S."/>
            <person name="Woodward J.R."/>
            <person name="Volckaert G."/>
            <person name="Aert R."/>
            <person name="Robben J."/>
            <person name="Grymonprez B."/>
            <person name="Weltjens I."/>
            <person name="Vanstreels E."/>
            <person name="Rieger M."/>
            <person name="Schaefer M."/>
            <person name="Mueller-Auer S."/>
            <person name="Gabel C."/>
            <person name="Fuchs M."/>
            <person name="Duesterhoeft A."/>
            <person name="Fritzc C."/>
            <person name="Holzer E."/>
            <person name="Moestl D."/>
            <person name="Hilbert H."/>
            <person name="Borzym K."/>
            <person name="Langer I."/>
            <person name="Beck A."/>
            <person name="Lehrach H."/>
            <person name="Reinhardt R."/>
            <person name="Pohl T.M."/>
            <person name="Eger P."/>
            <person name="Zimmermann W."/>
            <person name="Wedler H."/>
            <person name="Wambutt R."/>
            <person name="Purnelle B."/>
            <person name="Goffeau A."/>
            <person name="Cadieu E."/>
            <person name="Dreano S."/>
            <person name="Gloux S."/>
            <person name="Lelaure V."/>
            <person name="Mottier S."/>
            <person name="Galibert F."/>
            <person name="Aves S.J."/>
            <person name="Xiang Z."/>
            <person name="Hunt C."/>
            <person name="Moore K."/>
            <person name="Hurst S.M."/>
            <person name="Lucas M."/>
            <person name="Rochet M."/>
            <person name="Gaillardin C."/>
            <person name="Tallada V.A."/>
            <person name="Garzon A."/>
            <person name="Thode G."/>
            <person name="Daga R.R."/>
            <person name="Cruzado L."/>
            <person name="Jimenez J."/>
            <person name="Sanchez M."/>
            <person name="del Rey F."/>
            <person name="Benito J."/>
            <person name="Dominguez A."/>
            <person name="Revuelta J.L."/>
            <person name="Moreno S."/>
            <person name="Armstrong J."/>
            <person name="Forsburg S.L."/>
            <person name="Cerutti L."/>
            <person name="Lowe T."/>
            <person name="McCombie W.R."/>
            <person name="Paulsen I."/>
            <person name="Potashkin J."/>
            <person name="Shpakovski G.V."/>
            <person name="Ussery D."/>
            <person name="Barrell B.G."/>
            <person name="Nurse P."/>
        </authorList>
    </citation>
    <scope>NUCLEOTIDE SEQUENCE [LARGE SCALE GENOMIC DNA]</scope>
    <source>
        <strain>972 / ATCC 24843</strain>
    </source>
</reference>
<reference key="2">
    <citation type="journal article" date="2006" name="Nat. Biotechnol.">
        <title>ORFeome cloning and global analysis of protein localization in the fission yeast Schizosaccharomyces pombe.</title>
        <authorList>
            <person name="Matsuyama A."/>
            <person name="Arai R."/>
            <person name="Yashiroda Y."/>
            <person name="Shirai A."/>
            <person name="Kamata A."/>
            <person name="Sekido S."/>
            <person name="Kobayashi Y."/>
            <person name="Hashimoto A."/>
            <person name="Hamamoto M."/>
            <person name="Hiraoka Y."/>
            <person name="Horinouchi S."/>
            <person name="Yoshida M."/>
        </authorList>
    </citation>
    <scope>SUBCELLULAR LOCATION [LARGE SCALE ANALYSIS]</scope>
</reference>
<dbReference type="EC" id="6.1.1.10"/>
<dbReference type="EMBL" id="CU329670">
    <property type="protein sequence ID" value="CAB11680.1"/>
    <property type="molecule type" value="Genomic_DNA"/>
</dbReference>
<dbReference type="PIR" id="T38454">
    <property type="entry name" value="T38454"/>
</dbReference>
<dbReference type="SMR" id="O14000"/>
<dbReference type="FunCoup" id="O14000">
    <property type="interactions" value="269"/>
</dbReference>
<dbReference type="STRING" id="284812.O14000"/>
<dbReference type="iPTMnet" id="O14000"/>
<dbReference type="PaxDb" id="4896-SPAC27E2.06c.1"/>
<dbReference type="EnsemblFungi" id="SPAC27E2.06c.1">
    <property type="protein sequence ID" value="SPAC27E2.06c.1:pep"/>
    <property type="gene ID" value="SPAC27E2.06c"/>
</dbReference>
<dbReference type="KEGG" id="spo:2541577"/>
<dbReference type="PomBase" id="SPAC27E2.06c"/>
<dbReference type="VEuPathDB" id="FungiDB:SPAC27E2.06c"/>
<dbReference type="eggNOG" id="KOG0436">
    <property type="taxonomic scope" value="Eukaryota"/>
</dbReference>
<dbReference type="HOGENOM" id="CLU_009710_9_0_1"/>
<dbReference type="InParanoid" id="O14000"/>
<dbReference type="OMA" id="MDTQAFC"/>
<dbReference type="PhylomeDB" id="O14000"/>
<dbReference type="PRO" id="PR:O14000"/>
<dbReference type="Proteomes" id="UP000002485">
    <property type="component" value="Chromosome I"/>
</dbReference>
<dbReference type="GO" id="GO:0005759">
    <property type="term" value="C:mitochondrial matrix"/>
    <property type="evidence" value="ECO:0000305"/>
    <property type="project" value="PomBase"/>
</dbReference>
<dbReference type="GO" id="GO:0005739">
    <property type="term" value="C:mitochondrion"/>
    <property type="evidence" value="ECO:0007005"/>
    <property type="project" value="PomBase"/>
</dbReference>
<dbReference type="GO" id="GO:0005524">
    <property type="term" value="F:ATP binding"/>
    <property type="evidence" value="ECO:0000255"/>
    <property type="project" value="PomBase"/>
</dbReference>
<dbReference type="GO" id="GO:0004825">
    <property type="term" value="F:methionine-tRNA ligase activity"/>
    <property type="evidence" value="ECO:0000318"/>
    <property type="project" value="GO_Central"/>
</dbReference>
<dbReference type="GO" id="GO:0006431">
    <property type="term" value="P:methionyl-tRNA aminoacylation"/>
    <property type="evidence" value="ECO:0000318"/>
    <property type="project" value="GO_Central"/>
</dbReference>
<dbReference type="GO" id="GO:0032543">
    <property type="term" value="P:mitochondrial translation"/>
    <property type="evidence" value="ECO:0000303"/>
    <property type="project" value="PomBase"/>
</dbReference>
<dbReference type="CDD" id="cd00814">
    <property type="entry name" value="MetRS_core"/>
    <property type="match status" value="1"/>
</dbReference>
<dbReference type="FunFam" id="2.170.220.10:FF:000001">
    <property type="entry name" value="methionine--tRNA ligase, mitochondrial"/>
    <property type="match status" value="1"/>
</dbReference>
<dbReference type="Gene3D" id="2.170.220.10">
    <property type="match status" value="1"/>
</dbReference>
<dbReference type="Gene3D" id="3.40.50.620">
    <property type="entry name" value="HUPs"/>
    <property type="match status" value="1"/>
</dbReference>
<dbReference type="Gene3D" id="1.10.730.10">
    <property type="entry name" value="Isoleucyl-tRNA Synthetase, Domain 1"/>
    <property type="match status" value="1"/>
</dbReference>
<dbReference type="InterPro" id="IPR014758">
    <property type="entry name" value="Met-tRNA_synth"/>
</dbReference>
<dbReference type="InterPro" id="IPR023457">
    <property type="entry name" value="Met-tRNA_synth_2"/>
</dbReference>
<dbReference type="InterPro" id="IPR015413">
    <property type="entry name" value="Methionyl/Leucyl_tRNA_Synth"/>
</dbReference>
<dbReference type="InterPro" id="IPR033911">
    <property type="entry name" value="MetRS_core"/>
</dbReference>
<dbReference type="InterPro" id="IPR014729">
    <property type="entry name" value="Rossmann-like_a/b/a_fold"/>
</dbReference>
<dbReference type="InterPro" id="IPR009080">
    <property type="entry name" value="tRNAsynth_Ia_anticodon-bd"/>
</dbReference>
<dbReference type="NCBIfam" id="TIGR00398">
    <property type="entry name" value="metG"/>
    <property type="match status" value="1"/>
</dbReference>
<dbReference type="PANTHER" id="PTHR43326:SF1">
    <property type="entry name" value="METHIONINE--TRNA LIGASE, MITOCHONDRIAL"/>
    <property type="match status" value="1"/>
</dbReference>
<dbReference type="PANTHER" id="PTHR43326">
    <property type="entry name" value="METHIONYL-TRNA SYNTHETASE"/>
    <property type="match status" value="1"/>
</dbReference>
<dbReference type="Pfam" id="PF09334">
    <property type="entry name" value="tRNA-synt_1g"/>
    <property type="match status" value="1"/>
</dbReference>
<dbReference type="PRINTS" id="PR01041">
    <property type="entry name" value="TRNASYNTHMET"/>
</dbReference>
<dbReference type="SUPFAM" id="SSF47323">
    <property type="entry name" value="Anticodon-binding domain of a subclass of class I aminoacyl-tRNA synthetases"/>
    <property type="match status" value="1"/>
</dbReference>
<dbReference type="SUPFAM" id="SSF52374">
    <property type="entry name" value="Nucleotidylyl transferase"/>
    <property type="match status" value="1"/>
</dbReference>
<sequence>MLRKGICRLIHQVSESSKKPYFLTTPIFYVNAAPHLGHLYSLVLTDAIARFQNLKPDVSVISSTGTDEHGLKVQTVAQTEGVSPLQLCDRNSKRFADLAVAANTKFTHFIRTTNPKHQASVQEFWKTIQKAGMISFERHEGWYCVSDETFYPESAIQKVVDPATKQEKRVSMETGKEVQWSSEMNYHFLLSKFQSRLIEHYNKNPNFVQPSIFHTQVLEELKTGISDLSISRPKQRLSWGIPVPGNSQQTIYVWLDALINYISVIGYPWLNEKSSLSAGWPANMHVIGKDIIRFHCIYWPAFLMAAGLPLPEKILVHSHWTMNKVKMSKSLGNVVDPFWLIEKYGVDTIRYYLLKRGRLTSDSNFDIEELEKDEEHDLRRSLGVLLSRLQSKKLFISNEIQKQWHKKDDFTEYEDIVHELIELPVVCAQSIDGGCVYEVINLVQSVLRRVTKLFQLKEPWKLSDDSQEKIDTLMLVAHSLRISGILLQPIMPTKSTELLDQLGIPKNQRSLQNATNVFEPTEFTFHSGNNSHLFDKRTQ</sequence>
<accession>O14000</accession>
<organism>
    <name type="scientific">Schizosaccharomyces pombe (strain 972 / ATCC 24843)</name>
    <name type="common">Fission yeast</name>
    <dbReference type="NCBI Taxonomy" id="284812"/>
    <lineage>
        <taxon>Eukaryota</taxon>
        <taxon>Fungi</taxon>
        <taxon>Dikarya</taxon>
        <taxon>Ascomycota</taxon>
        <taxon>Taphrinomycotina</taxon>
        <taxon>Schizosaccharomycetes</taxon>
        <taxon>Schizosaccharomycetales</taxon>
        <taxon>Schizosaccharomycetaceae</taxon>
        <taxon>Schizosaccharomyces</taxon>
    </lineage>
</organism>
<protein>
    <recommendedName>
        <fullName>Probable methionine--tRNA ligase, mitochondrial</fullName>
        <ecNumber>6.1.1.10</ecNumber>
    </recommendedName>
    <alternativeName>
        <fullName>Mitochondrial methionyl-tRNA synthetase</fullName>
        <shortName>MtMetRS</shortName>
    </alternativeName>
</protein>
<name>SYMM_SCHPO</name>